<sequence>MAGPAPPVADELPGPAARRLYSRMEASCLELALEGERLCKAGDFKTGVAFFEAAVQVGTEDLKTLSAIYSQLGNAYFYLKEHGRALEYHKHDLLLARTIGDRMGEAKASGNLGNTLKVLGRFDEAAVCCQRHLSIAQEQGDKVGEARALYNIGNVYHAKGKQLSWNAANATQDPGHLPPDVRETLCKASEFYERNLSLVKELGDRAAQGRAYGNLGNTHYLLGNFTEATTFHKERLAIAKEFGDKAAERRAYSNLGNAHVFLGRFDVAAEYYKKTLQLSRQLRDQAVEAQACYSLGNTYTLLQDYERAAEYHLRHLLIAQELADRVGEGRACWSLGNAYVSMGRPAQALTFAKKHLQISQEIGDRHGELTARMNVAQLQLVLGRLTSPAASEKPDLAGYEAQGARPKRTQRLSAETWDLLRLPLEREQNGDSHHSGDWRGPSRDSLPLPVRSRKYQEGPDAERRPREGSHSPLDSADVRVHVPRTSIPRAPSSDEECFFDLLTKFQSSRMDDQRCPLDDGQAGAAEATAAPTLEDRIAQPSMTASPQTEEFFDLIASSQSRRLDDQRASVGSLPGLRITHSNAGHLRGHGEPQEPGDDFFNMLIKYQSSRIDDQRCPPPDVLPRGPTMPDEDFFSLIQRVQAKRMDEQRVDLAGGPEQGAGGPPEPQQQCQPGAS</sequence>
<reference key="1">
    <citation type="submission" date="2002-11" db="EMBL/GenBank/DDBJ databases">
        <title>cDNA clones of human proteins involved in signal transduction sequenced by the Guthrie cDNA resource center (www.cdna.org).</title>
        <authorList>
            <person name="Cismowski M.J."/>
            <person name="Kopatz S.A."/>
            <person name="Puhl H.L. III"/>
            <person name="Sharma S.V."/>
            <person name="Aronstam R.S."/>
        </authorList>
    </citation>
    <scope>NUCLEOTIDE SEQUENCE [LARGE SCALE MRNA] (ISOFORM 4)</scope>
    <source>
        <tissue>Brain</tissue>
    </source>
</reference>
<reference key="2">
    <citation type="journal article" date="2004" name="Nature">
        <title>DNA sequence and analysis of human chromosome 9.</title>
        <authorList>
            <person name="Humphray S.J."/>
            <person name="Oliver K."/>
            <person name="Hunt A.R."/>
            <person name="Plumb R.W."/>
            <person name="Loveland J.E."/>
            <person name="Howe K.L."/>
            <person name="Andrews T.D."/>
            <person name="Searle S."/>
            <person name="Hunt S.E."/>
            <person name="Scott C.E."/>
            <person name="Jones M.C."/>
            <person name="Ainscough R."/>
            <person name="Almeida J.P."/>
            <person name="Ambrose K.D."/>
            <person name="Ashwell R.I.S."/>
            <person name="Babbage A.K."/>
            <person name="Babbage S."/>
            <person name="Bagguley C.L."/>
            <person name="Bailey J."/>
            <person name="Banerjee R."/>
            <person name="Barker D.J."/>
            <person name="Barlow K.F."/>
            <person name="Bates K."/>
            <person name="Beasley H."/>
            <person name="Beasley O."/>
            <person name="Bird C.P."/>
            <person name="Bray-Allen S."/>
            <person name="Brown A.J."/>
            <person name="Brown J.Y."/>
            <person name="Burford D."/>
            <person name="Burrill W."/>
            <person name="Burton J."/>
            <person name="Carder C."/>
            <person name="Carter N.P."/>
            <person name="Chapman J.C."/>
            <person name="Chen Y."/>
            <person name="Clarke G."/>
            <person name="Clark S.Y."/>
            <person name="Clee C.M."/>
            <person name="Clegg S."/>
            <person name="Collier R.E."/>
            <person name="Corby N."/>
            <person name="Crosier M."/>
            <person name="Cummings A.T."/>
            <person name="Davies J."/>
            <person name="Dhami P."/>
            <person name="Dunn M."/>
            <person name="Dutta I."/>
            <person name="Dyer L.W."/>
            <person name="Earthrowl M.E."/>
            <person name="Faulkner L."/>
            <person name="Fleming C.J."/>
            <person name="Frankish A."/>
            <person name="Frankland J.A."/>
            <person name="French L."/>
            <person name="Fricker D.G."/>
            <person name="Garner P."/>
            <person name="Garnett J."/>
            <person name="Ghori J."/>
            <person name="Gilbert J.G.R."/>
            <person name="Glison C."/>
            <person name="Grafham D.V."/>
            <person name="Gribble S."/>
            <person name="Griffiths C."/>
            <person name="Griffiths-Jones S."/>
            <person name="Grocock R."/>
            <person name="Guy J."/>
            <person name="Hall R.E."/>
            <person name="Hammond S."/>
            <person name="Harley J.L."/>
            <person name="Harrison E.S.I."/>
            <person name="Hart E.A."/>
            <person name="Heath P.D."/>
            <person name="Henderson C.D."/>
            <person name="Hopkins B.L."/>
            <person name="Howard P.J."/>
            <person name="Howden P.J."/>
            <person name="Huckle E."/>
            <person name="Johnson C."/>
            <person name="Johnson D."/>
            <person name="Joy A.A."/>
            <person name="Kay M."/>
            <person name="Keenan S."/>
            <person name="Kershaw J.K."/>
            <person name="Kimberley A.M."/>
            <person name="King A."/>
            <person name="Knights A."/>
            <person name="Laird G.K."/>
            <person name="Langford C."/>
            <person name="Lawlor S."/>
            <person name="Leongamornlert D.A."/>
            <person name="Leversha M."/>
            <person name="Lloyd C."/>
            <person name="Lloyd D.M."/>
            <person name="Lovell J."/>
            <person name="Martin S."/>
            <person name="Mashreghi-Mohammadi M."/>
            <person name="Matthews L."/>
            <person name="McLaren S."/>
            <person name="McLay K.E."/>
            <person name="McMurray A."/>
            <person name="Milne S."/>
            <person name="Nickerson T."/>
            <person name="Nisbett J."/>
            <person name="Nordsiek G."/>
            <person name="Pearce A.V."/>
            <person name="Peck A.I."/>
            <person name="Porter K.M."/>
            <person name="Pandian R."/>
            <person name="Pelan S."/>
            <person name="Phillimore B."/>
            <person name="Povey S."/>
            <person name="Ramsey Y."/>
            <person name="Rand V."/>
            <person name="Scharfe M."/>
            <person name="Sehra H.K."/>
            <person name="Shownkeen R."/>
            <person name="Sims S.K."/>
            <person name="Skuce C.D."/>
            <person name="Smith M."/>
            <person name="Steward C.A."/>
            <person name="Swarbreck D."/>
            <person name="Sycamore N."/>
            <person name="Tester J."/>
            <person name="Thorpe A."/>
            <person name="Tracey A."/>
            <person name="Tromans A."/>
            <person name="Thomas D.W."/>
            <person name="Wall M."/>
            <person name="Wallis J.M."/>
            <person name="West A.P."/>
            <person name="Whitehead S.L."/>
            <person name="Willey D.L."/>
            <person name="Williams S.A."/>
            <person name="Wilming L."/>
            <person name="Wray P.W."/>
            <person name="Young L."/>
            <person name="Ashurst J.L."/>
            <person name="Coulson A."/>
            <person name="Blocker H."/>
            <person name="Durbin R.M."/>
            <person name="Sulston J.E."/>
            <person name="Hubbard T."/>
            <person name="Jackson M.J."/>
            <person name="Bentley D.R."/>
            <person name="Beck S."/>
            <person name="Rogers J."/>
            <person name="Dunham I."/>
        </authorList>
    </citation>
    <scope>NUCLEOTIDE SEQUENCE [LARGE SCALE GENOMIC DNA]</scope>
</reference>
<reference key="3">
    <citation type="submission" date="2005-07" db="EMBL/GenBank/DDBJ databases">
        <authorList>
            <person name="Mural R.J."/>
            <person name="Istrail S."/>
            <person name="Sutton G.G."/>
            <person name="Florea L."/>
            <person name="Halpern A.L."/>
            <person name="Mobarry C.M."/>
            <person name="Lippert R."/>
            <person name="Walenz B."/>
            <person name="Shatkay H."/>
            <person name="Dew I."/>
            <person name="Miller J.R."/>
            <person name="Flanigan M.J."/>
            <person name="Edwards N.J."/>
            <person name="Bolanos R."/>
            <person name="Fasulo D."/>
            <person name="Halldorsson B.V."/>
            <person name="Hannenhalli S."/>
            <person name="Turner R."/>
            <person name="Yooseph S."/>
            <person name="Lu F."/>
            <person name="Nusskern D.R."/>
            <person name="Shue B.C."/>
            <person name="Zheng X.H."/>
            <person name="Zhong F."/>
            <person name="Delcher A.L."/>
            <person name="Huson D.H."/>
            <person name="Kravitz S.A."/>
            <person name="Mouchard L."/>
            <person name="Reinert K."/>
            <person name="Remington K.A."/>
            <person name="Clark A.G."/>
            <person name="Waterman M.S."/>
            <person name="Eichler E.E."/>
            <person name="Adams M.D."/>
            <person name="Hunkapiller M.W."/>
            <person name="Myers E.W."/>
            <person name="Venter J.C."/>
        </authorList>
    </citation>
    <scope>NUCLEOTIDE SEQUENCE [LARGE SCALE GENOMIC DNA]</scope>
</reference>
<reference key="4">
    <citation type="journal article" date="2004" name="Genome Res.">
        <title>The status, quality, and expansion of the NIH full-length cDNA project: the Mammalian Gene Collection (MGC).</title>
        <authorList>
            <consortium name="The MGC Project Team"/>
        </authorList>
    </citation>
    <scope>NUCLEOTIDE SEQUENCE [LARGE SCALE MRNA] (ISOFORMS 2 AND 3)</scope>
    <source>
        <tissue>Fetal brain</tissue>
        <tissue>Rhabdomyosarcoma</tissue>
    </source>
</reference>
<reference key="5">
    <citation type="journal article" date="2007" name="BMC Genomics">
        <title>The full-ORF clone resource of the German cDNA consortium.</title>
        <authorList>
            <person name="Bechtel S."/>
            <person name="Rosenfelder H."/>
            <person name="Duda A."/>
            <person name="Schmidt C.P."/>
            <person name="Ernst U."/>
            <person name="Wellenreuther R."/>
            <person name="Mehrle A."/>
            <person name="Schuster C."/>
            <person name="Bahr A."/>
            <person name="Bloecker H."/>
            <person name="Heubner D."/>
            <person name="Hoerlein A."/>
            <person name="Michel G."/>
            <person name="Wedler H."/>
            <person name="Koehrer K."/>
            <person name="Ottenwaelder B."/>
            <person name="Poustka A."/>
            <person name="Wiemann S."/>
            <person name="Schupp I."/>
        </authorList>
    </citation>
    <scope>NUCLEOTIDE SEQUENCE [LARGE SCALE MRNA] OF 315-675 (ISOFORM 1)</scope>
    <source>
        <tissue>Mammary cancer</tissue>
    </source>
</reference>
<reference key="6">
    <citation type="journal article" date="2000" name="J. Biol. Chem.">
        <title>AGS3 inhibits GDP dissociation from galpha subunits of the Gi family and rhodopsin-dependent activation of transducin.</title>
        <authorList>
            <person name="Natochin M."/>
            <person name="Lester B."/>
            <person name="Peterson Y.K."/>
            <person name="Bernard M.L."/>
            <person name="Lanier S.M."/>
            <person name="Artemyev N.O."/>
        </authorList>
    </citation>
    <scope>FUNCTION</scope>
</reference>
<reference key="7">
    <citation type="journal article" date="2003" name="J. Biol. Chem.">
        <title>The G-protein regulator AGS3 controls an early event during macroautophagy in human intestinal HT-29 cells.</title>
        <authorList>
            <person name="Pattingre S."/>
            <person name="de Vries L."/>
            <person name="Bauvy C."/>
            <person name="Chantret I."/>
            <person name="Cluzeaud F."/>
            <person name="Ogier-Denis E."/>
            <person name="Vandewalle A."/>
            <person name="Codogno P."/>
        </authorList>
    </citation>
    <scope>FUNCTION</scope>
    <scope>TISSUE SPECIFICITY</scope>
    <scope>ALTERNATIVE SPLICING</scope>
    <scope>SUBCELLULAR LOCATION</scope>
</reference>
<reference key="8">
    <citation type="journal article" date="2006" name="Biochem. Biophys. Res. Commun.">
        <title>Two forms of human Inscuteable-related protein that links Par3 to the Pins homologues LGN and AGS3.</title>
        <authorList>
            <person name="Izaki T."/>
            <person name="Kamakura S."/>
            <person name="Kohjima M."/>
            <person name="Sumimoto H."/>
        </authorList>
    </citation>
    <scope>INTERACTION WITH INSC</scope>
</reference>
<reference key="9">
    <citation type="journal article" date="2008" name="J. Biol. Chem.">
        <title>The PDZ and band 4.1 containing protein Frmpd1 regulates the subcellular location of activator of G-protein signaling 3 and its interaction with G-proteins.</title>
        <authorList>
            <person name="An N."/>
            <person name="Blumer J.B."/>
            <person name="Bernard M.L."/>
            <person name="Lanier S.M."/>
        </authorList>
    </citation>
    <scope>INTERACTION WITH FRMPD1</scope>
    <scope>SUBCELLULAR LOCATION</scope>
</reference>
<reference key="10">
    <citation type="journal article" date="2008" name="J. Proteome Res.">
        <title>Phosphorylation analysis of primary human T lymphocytes using sequential IMAC and titanium oxide enrichment.</title>
        <authorList>
            <person name="Carrascal M."/>
            <person name="Ovelleiro D."/>
            <person name="Casas V."/>
            <person name="Gay M."/>
            <person name="Abian J."/>
        </authorList>
    </citation>
    <scope>IDENTIFICATION BY MASS SPECTROMETRY [LARGE SCALE ANALYSIS]</scope>
    <source>
        <tissue>T-cell</tissue>
    </source>
</reference>
<reference key="11">
    <citation type="journal article" date="2008" name="Proc. Natl. Acad. Sci. U.S.A.">
        <title>A quantitative atlas of mitotic phosphorylation.</title>
        <authorList>
            <person name="Dephoure N."/>
            <person name="Zhou C."/>
            <person name="Villen J."/>
            <person name="Beausoleil S.A."/>
            <person name="Bakalarski C.E."/>
            <person name="Elledge S.J."/>
            <person name="Gygi S.P."/>
        </authorList>
    </citation>
    <scope>PHOSPHORYLATION [LARGE SCALE ANALYSIS] AT SER-471; SER-492 AND SER-493</scope>
    <scope>IDENTIFICATION BY MASS SPECTROMETRY [LARGE SCALE ANALYSIS]</scope>
    <source>
        <tissue>Cervix carcinoma</tissue>
    </source>
</reference>
<reference key="12">
    <citation type="journal article" date="2009" name="Anal. Chem.">
        <title>Lys-N and trypsin cover complementary parts of the phosphoproteome in a refined SCX-based approach.</title>
        <authorList>
            <person name="Gauci S."/>
            <person name="Helbig A.O."/>
            <person name="Slijper M."/>
            <person name="Krijgsveld J."/>
            <person name="Heck A.J."/>
            <person name="Mohammed S."/>
        </authorList>
    </citation>
    <scope>IDENTIFICATION BY MASS SPECTROMETRY [LARGE SCALE ANALYSIS]</scope>
</reference>
<reference key="13">
    <citation type="journal article" date="2009" name="Sci. Signal.">
        <title>Quantitative phosphoproteomic analysis of T cell receptor signaling reveals system-wide modulation of protein-protein interactions.</title>
        <authorList>
            <person name="Mayya V."/>
            <person name="Lundgren D.H."/>
            <person name="Hwang S.-I."/>
            <person name="Rezaul K."/>
            <person name="Wu L."/>
            <person name="Eng J.K."/>
            <person name="Rodionov V."/>
            <person name="Han D.K."/>
        </authorList>
    </citation>
    <scope>PHOSPHORYLATION [LARGE SCALE ANALYSIS] AT SER-413</scope>
    <scope>IDENTIFICATION BY MASS SPECTROMETRY [LARGE SCALE ANALYSIS]</scope>
    <source>
        <tissue>Leukemic T-cell</tissue>
    </source>
</reference>
<reference key="14">
    <citation type="journal article" date="2011" name="BMC Syst. Biol.">
        <title>Initial characterization of the human central proteome.</title>
        <authorList>
            <person name="Burkard T.R."/>
            <person name="Planyavsky M."/>
            <person name="Kaupe I."/>
            <person name="Breitwieser F.P."/>
            <person name="Buerckstuemmer T."/>
            <person name="Bennett K.L."/>
            <person name="Superti-Furga G."/>
            <person name="Colinge J."/>
        </authorList>
    </citation>
    <scope>IDENTIFICATION BY MASS SPECTROMETRY [LARGE SCALE ANALYSIS]</scope>
</reference>
<reference key="15">
    <citation type="journal article" date="2013" name="J. Proteome Res.">
        <title>Toward a comprehensive characterization of a human cancer cell phosphoproteome.</title>
        <authorList>
            <person name="Zhou H."/>
            <person name="Di Palma S."/>
            <person name="Preisinger C."/>
            <person name="Peng M."/>
            <person name="Polat A.N."/>
            <person name="Heck A.J."/>
            <person name="Mohammed S."/>
        </authorList>
    </citation>
    <scope>PHOSPHORYLATION [LARGE SCALE ANALYSIS] AT SER-445; SER-469; SER-471 AND SER-492</scope>
    <scope>IDENTIFICATION BY MASS SPECTROMETRY [LARGE SCALE ANALYSIS]</scope>
    <source>
        <tissue>Cervix carcinoma</tissue>
        <tissue>Erythroleukemia</tissue>
    </source>
</reference>
<comment type="function">
    <text evidence="6 7">Guanine nucleotide dissociation inhibitor (GDI) which functions as a receptor-independent activator of heterotrimeric G-protein signaling. Keeps G(i/o) alpha subunit in its GDP-bound form thus uncoupling heterotrimeric G-proteins signaling from G protein-coupled receptors. Controls spindle orientation and asymmetric cell fate of cerebral cortical progenitors. May also be involved in macroautophagy in intestinal cells. May play a role in drug addiction.</text>
</comment>
<comment type="subunit">
    <text evidence="1 8 9">Interacts with GNAI1, GNAI2 and GNAI3 preferentially in their GDP-bound state. May also interact with GNAO1. Interacts with STK11/LKB1 and MACF1 (By similarity). Interacts with INSC/inscuteable and FRMPD1.</text>
</comment>
<comment type="interaction">
    <interactant intactId="EBI-10261098">
        <id>Q86YR5-3</id>
    </interactant>
    <interactant intactId="EBI-711810">
        <id>O14503</id>
        <label>BHLHE40</label>
    </interactant>
    <organismsDiffer>false</organismsDiffer>
    <experiments>3</experiments>
</comment>
<comment type="interaction">
    <interactant intactId="EBI-10261098">
        <id>Q86YR5-3</id>
    </interactant>
    <interactant intactId="EBI-2213388">
        <id>Q8TEB1</id>
        <label>DCAF11</label>
    </interactant>
    <organismsDiffer>false</organismsDiffer>
    <experiments>3</experiments>
</comment>
<comment type="interaction">
    <interactant intactId="EBI-10261098">
        <id>Q86YR5-3</id>
    </interactant>
    <interactant intactId="EBI-9679045">
        <id>Q9NQL9</id>
        <label>DMRT3</label>
    </interactant>
    <organismsDiffer>false</organismsDiffer>
    <experiments>3</experiments>
</comment>
<comment type="interaction">
    <interactant intactId="EBI-10261098">
        <id>Q86YR5-3</id>
    </interactant>
    <interactant intactId="EBI-7225287">
        <id>Q96MY7</id>
        <label>FAM161B</label>
    </interactant>
    <organismsDiffer>false</organismsDiffer>
    <experiments>3</experiments>
</comment>
<comment type="interaction">
    <interactant intactId="EBI-10261098">
        <id>Q86YR5-3</id>
    </interactant>
    <interactant intactId="EBI-1384254">
        <id>Q86UY5</id>
        <label>FAM83A</label>
    </interactant>
    <organismsDiffer>false</organismsDiffer>
    <experiments>3</experiments>
</comment>
<comment type="interaction">
    <interactant intactId="EBI-10261098">
        <id>Q86YR5-3</id>
    </interactant>
    <interactant intactId="EBI-6658203">
        <id>Q86YD7</id>
        <label>FAM90A1</label>
    </interactant>
    <organismsDiffer>false</organismsDiffer>
    <experiments>3</experiments>
</comment>
<comment type="interaction">
    <interactant intactId="EBI-10261098">
        <id>Q86YR5-3</id>
    </interactant>
    <interactant intactId="EBI-10188645">
        <id>O75603</id>
        <label>GCM2</label>
    </interactant>
    <organismsDiffer>false</organismsDiffer>
    <experiments>3</experiments>
</comment>
<comment type="interaction">
    <interactant intactId="EBI-10261098">
        <id>Q86YR5-3</id>
    </interactant>
    <interactant intactId="EBI-7251368">
        <id>Q9BZE0</id>
        <label>GLIS2</label>
    </interactant>
    <organismsDiffer>false</organismsDiffer>
    <experiments>3</experiments>
</comment>
<comment type="interaction">
    <interactant intactId="EBI-10261098">
        <id>Q86YR5-3</id>
    </interactant>
    <interactant intactId="EBI-740641">
        <id>Q9NP66</id>
        <label>HMG20A</label>
    </interactant>
    <organismsDiffer>false</organismsDiffer>
    <experiments>3</experiments>
</comment>
<comment type="interaction">
    <interactant intactId="EBI-10261098">
        <id>Q86YR5-3</id>
    </interactant>
    <interactant intactId="EBI-2556193">
        <id>Q63ZY3</id>
        <label>KANK2</label>
    </interactant>
    <organismsDiffer>false</organismsDiffer>
    <experiments>3</experiments>
</comment>
<comment type="interaction">
    <interactant intactId="EBI-10261098">
        <id>Q86YR5-3</id>
    </interactant>
    <interactant intactId="EBI-10265323">
        <id>Q8N443</id>
        <label>RIBC1</label>
    </interactant>
    <organismsDiffer>false</organismsDiffer>
    <experiments>3</experiments>
</comment>
<comment type="interaction">
    <interactant intactId="EBI-10261098">
        <id>Q86YR5-3</id>
    </interactant>
    <interactant intactId="EBI-693002">
        <id>Q8WYJ6</id>
        <label>SEPTIN1</label>
    </interactant>
    <organismsDiffer>false</organismsDiffer>
    <experiments>3</experiments>
</comment>
<comment type="interaction">
    <interactant intactId="EBI-10261098">
        <id>Q86YR5-3</id>
    </interactant>
    <interactant intactId="EBI-745958">
        <id>Q5VWN6</id>
        <label>TASOR2</label>
    </interactant>
    <organismsDiffer>false</organismsDiffer>
    <experiments>3</experiments>
</comment>
<comment type="interaction">
    <interactant intactId="EBI-10261098">
        <id>Q86YR5-3</id>
    </interactant>
    <interactant intactId="EBI-750487">
        <id>Q8WW24</id>
        <label>TEKT4</label>
    </interactant>
    <organismsDiffer>false</organismsDiffer>
    <experiments>3</experiments>
</comment>
<comment type="interaction">
    <interactant intactId="EBI-10261098">
        <id>Q86YR5-3</id>
    </interactant>
    <interactant intactId="EBI-11980193">
        <id>Q14119</id>
        <label>VEZF1</label>
    </interactant>
    <organismsDiffer>false</organismsDiffer>
    <experiments>3</experiments>
</comment>
<comment type="subcellular location">
    <subcellularLocation>
        <location>Cytoplasm</location>
        <location>Cytosol</location>
    </subcellularLocation>
    <subcellularLocation>
        <location>Endoplasmic reticulum membrane</location>
        <topology>Peripheral membrane protein</topology>
        <orientation>Cytoplasmic side</orientation>
    </subcellularLocation>
    <subcellularLocation>
        <location>Golgi apparatus membrane</location>
        <topology>Peripheral membrane protein</topology>
        <orientation>Cytoplasmic side</orientation>
    </subcellularLocation>
    <subcellularLocation>
        <location>Cell membrane</location>
        <topology>Peripheral membrane protein</topology>
        <orientation>Cytoplasmic side</orientation>
    </subcellularLocation>
</comment>
<comment type="alternative products">
    <event type="alternative splicing"/>
    <isoform>
        <id>Q86YR5-1</id>
        <name>1</name>
        <sequence type="displayed"/>
    </isoform>
    <isoform>
        <id>Q86YR5-2</id>
        <name>2</name>
        <name>Short</name>
        <sequence type="described" ref="VSP_020937"/>
    </isoform>
    <isoform>
        <id>Q86YR5-3</id>
        <name>3</name>
        <sequence type="described" ref="VSP_020938 VSP_020939"/>
    </isoform>
    <isoform>
        <id>Q86YR5-4</id>
        <name>4</name>
        <name>FL</name>
        <sequence type="described" ref="VSP_039028"/>
    </isoform>
</comment>
<comment type="tissue specificity">
    <text evidence="7">Expressed in intestinal cells.</text>
</comment>
<comment type="domain">
    <text evidence="1">The GoLoco domains mediate interaction with G(i/o) alpha (By similarity). The GoLoco domains are essential for the GDI activity toward G(i/o) alpha.</text>
</comment>
<comment type="PTM">
    <text evidence="1">Phosphorylation regulates interaction with G(i/o) alpha.</text>
</comment>
<comment type="miscellaneous">
    <molecule>Isoform 2</molecule>
    <text evidence="12">Minor isoform.</text>
</comment>
<comment type="miscellaneous">
    <molecule>Isoform 4</molecule>
    <text evidence="12">Major isoform.</text>
</comment>
<comment type="similarity">
    <text evidence="12">Belongs to the GPSM family.</text>
</comment>
<comment type="sequence caution" evidence="12">
    <conflict type="erroneous initiation">
        <sequence resource="EMBL-CDS" id="AAH09979"/>
    </conflict>
    <text>Truncated N-terminus.</text>
</comment>
<comment type="sequence caution" evidence="12">
    <conflict type="erroneous initiation">
        <sequence resource="EMBL-CDS" id="AAH17353"/>
    </conflict>
    <text>Truncated N-terminus.</text>
</comment>
<comment type="sequence caution" evidence="12">
    <conflict type="frameshift">
        <sequence resource="EMBL-CDS" id="CAB55951"/>
    </conflict>
</comment>
<dbReference type="EMBL" id="AY173053">
    <property type="protein sequence ID" value="AAO17260.1"/>
    <property type="molecule type" value="mRNA"/>
</dbReference>
<dbReference type="EMBL" id="BX649589">
    <property type="status" value="NOT_ANNOTATED_CDS"/>
    <property type="molecule type" value="Genomic_DNA"/>
</dbReference>
<dbReference type="EMBL" id="CH471090">
    <property type="protein sequence ID" value="EAW88216.1"/>
    <property type="molecule type" value="Genomic_DNA"/>
</dbReference>
<dbReference type="EMBL" id="BC009979">
    <property type="protein sequence ID" value="AAH09979.1"/>
    <property type="status" value="ALT_INIT"/>
    <property type="molecule type" value="mRNA"/>
</dbReference>
<dbReference type="EMBL" id="BC017353">
    <property type="protein sequence ID" value="AAH17353.1"/>
    <property type="status" value="ALT_INIT"/>
    <property type="molecule type" value="mRNA"/>
</dbReference>
<dbReference type="EMBL" id="BC048343">
    <property type="protein sequence ID" value="AAH48343.1"/>
    <property type="molecule type" value="mRNA"/>
</dbReference>
<dbReference type="EMBL" id="AL117478">
    <property type="protein sequence ID" value="CAB55951.1"/>
    <property type="status" value="ALT_FRAME"/>
    <property type="molecule type" value="mRNA"/>
</dbReference>
<dbReference type="CCDS" id="CCDS48055.1">
    <molecule id="Q86YR5-1"/>
</dbReference>
<dbReference type="CCDS" id="CCDS48056.1">
    <molecule id="Q86YR5-2"/>
</dbReference>
<dbReference type="CCDS" id="CCDS6996.2">
    <molecule id="Q86YR5-3"/>
</dbReference>
<dbReference type="PIR" id="T17261">
    <property type="entry name" value="T17261"/>
</dbReference>
<dbReference type="RefSeq" id="NP_001139110.2">
    <property type="nucleotide sequence ID" value="NM_001145638.2"/>
</dbReference>
<dbReference type="RefSeq" id="NP_001139111.1">
    <molecule id="Q86YR5-2"/>
    <property type="nucleotide sequence ID" value="NM_001145639.2"/>
</dbReference>
<dbReference type="RefSeq" id="NP_001186932.1">
    <molecule id="Q86YR5-2"/>
    <property type="nucleotide sequence ID" value="NM_001200003.2"/>
</dbReference>
<dbReference type="RefSeq" id="NP_056412.5">
    <property type="nucleotide sequence ID" value="NM_015597.5"/>
</dbReference>
<dbReference type="RefSeq" id="XP_016870088.1">
    <property type="nucleotide sequence ID" value="XM_017014599.1"/>
</dbReference>
<dbReference type="SMR" id="Q86YR5"/>
<dbReference type="BioGRID" id="117539">
    <property type="interactions" value="65"/>
</dbReference>
<dbReference type="FunCoup" id="Q86YR5">
    <property type="interactions" value="213"/>
</dbReference>
<dbReference type="IntAct" id="Q86YR5">
    <property type="interactions" value="43"/>
</dbReference>
<dbReference type="MINT" id="Q86YR5"/>
<dbReference type="STRING" id="9606.ENSP00000392828"/>
<dbReference type="iPTMnet" id="Q86YR5"/>
<dbReference type="MetOSite" id="Q86YR5"/>
<dbReference type="PhosphoSitePlus" id="Q86YR5"/>
<dbReference type="BioMuta" id="GPSM1"/>
<dbReference type="DMDM" id="294862435"/>
<dbReference type="jPOST" id="Q86YR5"/>
<dbReference type="MassIVE" id="Q86YR5"/>
<dbReference type="PaxDb" id="9606-ENSP00000392828"/>
<dbReference type="PeptideAtlas" id="Q86YR5"/>
<dbReference type="ProteomicsDB" id="70452">
    <molecule id="Q86YR5-1"/>
</dbReference>
<dbReference type="ProteomicsDB" id="70453">
    <molecule id="Q86YR5-2"/>
</dbReference>
<dbReference type="ProteomicsDB" id="70454">
    <molecule id="Q86YR5-3"/>
</dbReference>
<dbReference type="ProteomicsDB" id="70455">
    <molecule id="Q86YR5-4"/>
</dbReference>
<dbReference type="Pumba" id="Q86YR5"/>
<dbReference type="Antibodypedia" id="32122">
    <property type="antibodies" value="208 antibodies from 27 providers"/>
</dbReference>
<dbReference type="DNASU" id="26086"/>
<dbReference type="Ensembl" id="ENST00000291775.3">
    <molecule id="Q86YR5-2"/>
    <property type="protein sequence ID" value="ENSP00000291775.3"/>
    <property type="gene ID" value="ENSG00000160360.13"/>
</dbReference>
<dbReference type="Ensembl" id="ENST00000392944.5">
    <molecule id="Q86YR5-2"/>
    <property type="protein sequence ID" value="ENSP00000376673.1"/>
    <property type="gene ID" value="ENSG00000160360.13"/>
</dbReference>
<dbReference type="Ensembl" id="ENST00000429455.5">
    <molecule id="Q86YR5-2"/>
    <property type="protein sequence ID" value="ENSP00000390705.1"/>
    <property type="gene ID" value="ENSG00000160360.13"/>
</dbReference>
<dbReference type="GeneID" id="26086"/>
<dbReference type="KEGG" id="hsa:26086"/>
<dbReference type="UCSC" id="uc004che.3">
    <molecule id="Q86YR5-1"/>
    <property type="organism name" value="human"/>
</dbReference>
<dbReference type="AGR" id="HGNC:17858"/>
<dbReference type="CTD" id="26086"/>
<dbReference type="DisGeNET" id="26086"/>
<dbReference type="GeneCards" id="GPSM1"/>
<dbReference type="HGNC" id="HGNC:17858">
    <property type="gene designation" value="GPSM1"/>
</dbReference>
<dbReference type="HPA" id="ENSG00000160360">
    <property type="expression patterns" value="Tissue enhanced (brain)"/>
</dbReference>
<dbReference type="MIM" id="609491">
    <property type="type" value="gene"/>
</dbReference>
<dbReference type="neXtProt" id="NX_Q86YR5"/>
<dbReference type="OpenTargets" id="ENSG00000160360"/>
<dbReference type="PharmGKB" id="PA134986171"/>
<dbReference type="VEuPathDB" id="HostDB:ENSG00000160360"/>
<dbReference type="eggNOG" id="KOG1130">
    <property type="taxonomic scope" value="Eukaryota"/>
</dbReference>
<dbReference type="GeneTree" id="ENSGT00940000154667"/>
<dbReference type="HOGENOM" id="CLU_102588_0_0_1"/>
<dbReference type="InParanoid" id="Q86YR5"/>
<dbReference type="OrthoDB" id="286233at2759"/>
<dbReference type="PAN-GO" id="Q86YR5">
    <property type="GO annotations" value="3 GO annotations based on evolutionary models"/>
</dbReference>
<dbReference type="PhylomeDB" id="Q86YR5"/>
<dbReference type="TreeFam" id="TF328344"/>
<dbReference type="PathwayCommons" id="Q86YR5"/>
<dbReference type="Reactome" id="R-HSA-418594">
    <property type="pathway name" value="G alpha (i) signalling events"/>
</dbReference>
<dbReference type="SignaLink" id="Q86YR5"/>
<dbReference type="BioGRID-ORCS" id="26086">
    <property type="hits" value="21 hits in 1152 CRISPR screens"/>
</dbReference>
<dbReference type="CD-CODE" id="FB4E32DD">
    <property type="entry name" value="Presynaptic clusters and postsynaptic densities"/>
</dbReference>
<dbReference type="ChiTaRS" id="GPSM1">
    <property type="organism name" value="human"/>
</dbReference>
<dbReference type="GeneWiki" id="GPSM1"/>
<dbReference type="GenomeRNAi" id="26086"/>
<dbReference type="Pharos" id="Q86YR5">
    <property type="development level" value="Tbio"/>
</dbReference>
<dbReference type="PRO" id="PR:Q86YR5"/>
<dbReference type="Proteomes" id="UP000005640">
    <property type="component" value="Chromosome 9"/>
</dbReference>
<dbReference type="RNAct" id="Q86YR5">
    <property type="molecule type" value="protein"/>
</dbReference>
<dbReference type="Bgee" id="ENSG00000160360">
    <property type="expression patterns" value="Expressed in tibia and 166 other cell types or tissues"/>
</dbReference>
<dbReference type="ExpressionAtlas" id="Q86YR5">
    <property type="expression patterns" value="baseline and differential"/>
</dbReference>
<dbReference type="GO" id="GO:0005829">
    <property type="term" value="C:cytosol"/>
    <property type="evidence" value="ECO:0007669"/>
    <property type="project" value="UniProtKB-SubCell"/>
</dbReference>
<dbReference type="GO" id="GO:0005789">
    <property type="term" value="C:endoplasmic reticulum membrane"/>
    <property type="evidence" value="ECO:0007669"/>
    <property type="project" value="UniProtKB-SubCell"/>
</dbReference>
<dbReference type="GO" id="GO:0000139">
    <property type="term" value="C:Golgi membrane"/>
    <property type="evidence" value="ECO:0007669"/>
    <property type="project" value="UniProtKB-SubCell"/>
</dbReference>
<dbReference type="GO" id="GO:0005886">
    <property type="term" value="C:plasma membrane"/>
    <property type="evidence" value="ECO:0000314"/>
    <property type="project" value="UniProtKB"/>
</dbReference>
<dbReference type="GO" id="GO:0032991">
    <property type="term" value="C:protein-containing complex"/>
    <property type="evidence" value="ECO:0000314"/>
    <property type="project" value="UniProtKB"/>
</dbReference>
<dbReference type="GO" id="GO:0001965">
    <property type="term" value="F:G-protein alpha-subunit binding"/>
    <property type="evidence" value="ECO:0000318"/>
    <property type="project" value="GO_Central"/>
</dbReference>
<dbReference type="GO" id="GO:0005092">
    <property type="term" value="F:GDP-dissociation inhibitor activity"/>
    <property type="evidence" value="ECO:0000314"/>
    <property type="project" value="UniProtKB"/>
</dbReference>
<dbReference type="GO" id="GO:0030154">
    <property type="term" value="P:cell differentiation"/>
    <property type="evidence" value="ECO:0007669"/>
    <property type="project" value="UniProtKB-KW"/>
</dbReference>
<dbReference type="GO" id="GO:0000132">
    <property type="term" value="P:establishment of mitotic spindle orientation"/>
    <property type="evidence" value="ECO:0000318"/>
    <property type="project" value="GO_Central"/>
</dbReference>
<dbReference type="GO" id="GO:0034260">
    <property type="term" value="P:negative regulation of GTPase activity"/>
    <property type="evidence" value="ECO:0000314"/>
    <property type="project" value="UniProtKB"/>
</dbReference>
<dbReference type="GO" id="GO:1905098">
    <property type="term" value="P:negative regulation of guanyl-nucleotide exchange factor activity"/>
    <property type="evidence" value="ECO:0000314"/>
    <property type="project" value="UniProtKB"/>
</dbReference>
<dbReference type="GO" id="GO:0007399">
    <property type="term" value="P:nervous system development"/>
    <property type="evidence" value="ECO:0007669"/>
    <property type="project" value="UniProtKB-KW"/>
</dbReference>
<dbReference type="GO" id="GO:0016239">
    <property type="term" value="P:positive regulation of macroautophagy"/>
    <property type="evidence" value="ECO:0000314"/>
    <property type="project" value="UniProtKB"/>
</dbReference>
<dbReference type="FunFam" id="1.25.40.10:FF:000192">
    <property type="entry name" value="G-protein-signaling modulator 1 isoform a"/>
    <property type="match status" value="1"/>
</dbReference>
<dbReference type="FunFam" id="1.25.40.10:FF:000145">
    <property type="entry name" value="G-protein-signaling modulator 1 isoform X2"/>
    <property type="match status" value="1"/>
</dbReference>
<dbReference type="FunFam" id="1.25.40.10:FF:000043">
    <property type="entry name" value="G-protein-signaling modulator 2 isoform X1"/>
    <property type="match status" value="1"/>
</dbReference>
<dbReference type="Gene3D" id="1.25.40.10">
    <property type="entry name" value="Tetratricopeptide repeat domain"/>
    <property type="match status" value="3"/>
</dbReference>
<dbReference type="InterPro" id="IPR003109">
    <property type="entry name" value="GoLoco_motif"/>
</dbReference>
<dbReference type="InterPro" id="IPR052386">
    <property type="entry name" value="GPSM"/>
</dbReference>
<dbReference type="InterPro" id="IPR011990">
    <property type="entry name" value="TPR-like_helical_dom_sf"/>
</dbReference>
<dbReference type="InterPro" id="IPR019734">
    <property type="entry name" value="TPR_rpt"/>
</dbReference>
<dbReference type="PANTHER" id="PTHR45954:SF2">
    <property type="entry name" value="G-PROTEIN-SIGNALING MODULATOR 1"/>
    <property type="match status" value="1"/>
</dbReference>
<dbReference type="PANTHER" id="PTHR45954">
    <property type="entry name" value="LD33695P"/>
    <property type="match status" value="1"/>
</dbReference>
<dbReference type="Pfam" id="PF02188">
    <property type="entry name" value="GoLoco"/>
    <property type="match status" value="4"/>
</dbReference>
<dbReference type="Pfam" id="PF13424">
    <property type="entry name" value="TPR_12"/>
    <property type="match status" value="3"/>
</dbReference>
<dbReference type="SMART" id="SM00390">
    <property type="entry name" value="GoLoco"/>
    <property type="match status" value="4"/>
</dbReference>
<dbReference type="SMART" id="SM00028">
    <property type="entry name" value="TPR"/>
    <property type="match status" value="6"/>
</dbReference>
<dbReference type="SUPFAM" id="SSF48452">
    <property type="entry name" value="TPR-like"/>
    <property type="match status" value="2"/>
</dbReference>
<dbReference type="PROSITE" id="PS50877">
    <property type="entry name" value="GOLOCO"/>
    <property type="match status" value="4"/>
</dbReference>
<dbReference type="PROSITE" id="PS50005">
    <property type="entry name" value="TPR"/>
    <property type="match status" value="6"/>
</dbReference>
<dbReference type="PROSITE" id="PS50293">
    <property type="entry name" value="TPR_REGION"/>
    <property type="match status" value="2"/>
</dbReference>
<feature type="chain" id="PRO_0000252402" description="G-protein-signaling modulator 1">
    <location>
        <begin position="1"/>
        <end position="675"/>
    </location>
</feature>
<feature type="repeat" description="TPR 1">
    <location>
        <begin position="28"/>
        <end position="61"/>
    </location>
</feature>
<feature type="repeat" description="TPR 2">
    <location>
        <begin position="66"/>
        <end position="99"/>
    </location>
</feature>
<feature type="repeat" description="TPR 3">
    <location>
        <begin position="106"/>
        <end position="139"/>
    </location>
</feature>
<feature type="repeat" description="TPR 4">
    <location>
        <begin position="146"/>
        <end position="181"/>
    </location>
</feature>
<feature type="repeat" description="TPR 5">
    <location>
        <begin position="183"/>
        <end position="202"/>
    </location>
</feature>
<feature type="repeat" description="TPR 6">
    <location>
        <begin position="209"/>
        <end position="242"/>
    </location>
</feature>
<feature type="repeat" description="TPR 7">
    <location>
        <begin position="249"/>
        <end position="282"/>
    </location>
</feature>
<feature type="repeat" description="TPR 8">
    <location>
        <begin position="289"/>
        <end position="322"/>
    </location>
</feature>
<feature type="repeat" description="TPR 9">
    <location>
        <begin position="329"/>
        <end position="362"/>
    </location>
</feature>
<feature type="domain" description="GoLoco 1" evidence="4">
    <location>
        <begin position="495"/>
        <end position="517"/>
    </location>
</feature>
<feature type="domain" description="GoLoco 2" evidence="4">
    <location>
        <begin position="548"/>
        <end position="570"/>
    </location>
</feature>
<feature type="domain" description="GoLoco 3" evidence="4">
    <location>
        <begin position="596"/>
        <end position="618"/>
    </location>
</feature>
<feature type="domain" description="GoLoco 4" evidence="4">
    <location>
        <begin position="630"/>
        <end position="652"/>
    </location>
</feature>
<feature type="region of interest" description="Mediates association with membranes" evidence="1">
    <location>
        <begin position="1"/>
        <end position="509"/>
    </location>
</feature>
<feature type="region of interest" description="Interaction with STK11/LKB1" evidence="1">
    <location>
        <begin position="364"/>
        <end position="487"/>
    </location>
</feature>
<feature type="region of interest" description="Disordered" evidence="5">
    <location>
        <begin position="391"/>
        <end position="412"/>
    </location>
</feature>
<feature type="region of interest" description="Disordered" evidence="5">
    <location>
        <begin position="424"/>
        <end position="492"/>
    </location>
</feature>
<feature type="region of interest" description="Disordered" evidence="5">
    <location>
        <begin position="610"/>
        <end position="630"/>
    </location>
</feature>
<feature type="region of interest" description="Disordered" evidence="5">
    <location>
        <begin position="644"/>
        <end position="675"/>
    </location>
</feature>
<feature type="compositionally biased region" description="Basic and acidic residues" evidence="5">
    <location>
        <begin position="424"/>
        <end position="442"/>
    </location>
</feature>
<feature type="compositionally biased region" description="Basic and acidic residues" evidence="5">
    <location>
        <begin position="454"/>
        <end position="469"/>
    </location>
</feature>
<feature type="modified residue" description="Phosphoserine" evidence="14">
    <location>
        <position position="413"/>
    </location>
</feature>
<feature type="modified residue" description="Omega-N-methylarginine" evidence="2">
    <location>
        <position position="421"/>
    </location>
</feature>
<feature type="modified residue" description="Phosphoserine" evidence="15">
    <location>
        <position position="445"/>
    </location>
</feature>
<feature type="modified residue" description="Phosphoserine" evidence="15">
    <location>
        <position position="469"/>
    </location>
</feature>
<feature type="modified residue" description="Phosphoserine" evidence="13 15">
    <location>
        <position position="471"/>
    </location>
</feature>
<feature type="modified residue" description="Phosphoserine" evidence="13 15">
    <location>
        <position position="492"/>
    </location>
</feature>
<feature type="modified residue" description="Phosphoserine" evidence="13">
    <location>
        <position position="493"/>
    </location>
</feature>
<feature type="modified residue" description="Phosphoserine" evidence="3">
    <location>
        <position position="545"/>
    </location>
</feature>
<feature type="modified residue" description="Phosphoserine" evidence="3">
    <location>
        <position position="569"/>
    </location>
</feature>
<feature type="splice variant" id="VSP_020937" description="In isoform 2." evidence="10">
    <location>
        <begin position="1"/>
        <end position="509"/>
    </location>
</feature>
<feature type="splice variant" id="VSP_039028" description="In isoform 4." evidence="11">
    <location>
        <begin position="1"/>
        <end position="23"/>
    </location>
</feature>
<feature type="splice variant" id="VSP_020938" description="In isoform 3." evidence="10">
    <original>ARPKRTQRLSAETWDLLRLPLEREQNGDSHHSGDWRGPSRDSLPLPVRSRKYQE</original>
    <variation>EFQGCGGVLLPTGTDRIRSCGGVGSRPGQHGGGGSRQKMAPTSQFFLASGTAQA</variation>
    <location>
        <begin position="404"/>
        <end position="457"/>
    </location>
</feature>
<feature type="splice variant" id="VSP_020939" description="In isoform 3." evidence="10">
    <location>
        <begin position="458"/>
        <end position="675"/>
    </location>
</feature>
<gene>
    <name type="primary">GPSM1</name>
    <name type="synonym">AGS3</name>
</gene>
<evidence type="ECO:0000250" key="1"/>
<evidence type="ECO:0000250" key="2">
    <source>
        <dbReference type="UniProtKB" id="Q6IR34"/>
    </source>
</evidence>
<evidence type="ECO:0000250" key="3">
    <source>
        <dbReference type="UniProtKB" id="Q9R080"/>
    </source>
</evidence>
<evidence type="ECO:0000255" key="4">
    <source>
        <dbReference type="PROSITE-ProRule" id="PRU00097"/>
    </source>
</evidence>
<evidence type="ECO:0000256" key="5">
    <source>
        <dbReference type="SAM" id="MobiDB-lite"/>
    </source>
</evidence>
<evidence type="ECO:0000269" key="6">
    <source>
    </source>
</evidence>
<evidence type="ECO:0000269" key="7">
    <source>
    </source>
</evidence>
<evidence type="ECO:0000269" key="8">
    <source>
    </source>
</evidence>
<evidence type="ECO:0000269" key="9">
    <source>
    </source>
</evidence>
<evidence type="ECO:0000303" key="10">
    <source>
    </source>
</evidence>
<evidence type="ECO:0000303" key="11">
    <source ref="1"/>
</evidence>
<evidence type="ECO:0000305" key="12"/>
<evidence type="ECO:0007744" key="13">
    <source>
    </source>
</evidence>
<evidence type="ECO:0007744" key="14">
    <source>
    </source>
</evidence>
<evidence type="ECO:0007744" key="15">
    <source>
    </source>
</evidence>
<protein>
    <recommendedName>
        <fullName>G-protein-signaling modulator 1</fullName>
    </recommendedName>
    <alternativeName>
        <fullName>Activator of G-protein signaling 3</fullName>
    </alternativeName>
</protein>
<accession>Q86YR5</accession>
<accession>A9Z1X4</accession>
<accession>B1B0W3</accession>
<accession>Q86SR5</accession>
<accession>Q969T1</accession>
<accession>Q9UFS8</accession>
<keyword id="KW-0025">Alternative splicing</keyword>
<keyword id="KW-1003">Cell membrane</keyword>
<keyword id="KW-0963">Cytoplasm</keyword>
<keyword id="KW-0217">Developmental protein</keyword>
<keyword id="KW-0221">Differentiation</keyword>
<keyword id="KW-0256">Endoplasmic reticulum</keyword>
<keyword id="KW-0333">Golgi apparatus</keyword>
<keyword id="KW-0472">Membrane</keyword>
<keyword id="KW-0488">Methylation</keyword>
<keyword id="KW-0524">Neurogenesis</keyword>
<keyword id="KW-0597">Phosphoprotein</keyword>
<keyword id="KW-1267">Proteomics identification</keyword>
<keyword id="KW-1185">Reference proteome</keyword>
<keyword id="KW-0677">Repeat</keyword>
<keyword id="KW-0802">TPR repeat</keyword>
<proteinExistence type="evidence at protein level"/>
<name>GPSM1_HUMAN</name>
<organism>
    <name type="scientific">Homo sapiens</name>
    <name type="common">Human</name>
    <dbReference type="NCBI Taxonomy" id="9606"/>
    <lineage>
        <taxon>Eukaryota</taxon>
        <taxon>Metazoa</taxon>
        <taxon>Chordata</taxon>
        <taxon>Craniata</taxon>
        <taxon>Vertebrata</taxon>
        <taxon>Euteleostomi</taxon>
        <taxon>Mammalia</taxon>
        <taxon>Eutheria</taxon>
        <taxon>Euarchontoglires</taxon>
        <taxon>Primates</taxon>
        <taxon>Haplorrhini</taxon>
        <taxon>Catarrhini</taxon>
        <taxon>Hominidae</taxon>
        <taxon>Homo</taxon>
    </lineage>
</organism>